<organism>
    <name type="scientific">Penicillium oxalicum</name>
    <dbReference type="NCBI Taxonomy" id="69781"/>
    <lineage>
        <taxon>Eukaryota</taxon>
        <taxon>Fungi</taxon>
        <taxon>Dikarya</taxon>
        <taxon>Ascomycota</taxon>
        <taxon>Pezizomycotina</taxon>
        <taxon>Eurotiomycetes</taxon>
        <taxon>Eurotiomycetidae</taxon>
        <taxon>Eurotiales</taxon>
        <taxon>Aspergillaceae</taxon>
        <taxon>Penicillium</taxon>
    </lineage>
</organism>
<evidence type="ECO:0000255" key="1"/>
<evidence type="ECO:0000255" key="2">
    <source>
        <dbReference type="PROSITE-ProRule" id="PRU00498"/>
    </source>
</evidence>
<evidence type="ECO:0000269" key="3">
    <source>
    </source>
</evidence>
<evidence type="ECO:0000269" key="4">
    <source>
    </source>
</evidence>
<evidence type="ECO:0000303" key="5">
    <source>
    </source>
</evidence>
<evidence type="ECO:0000303" key="6">
    <source>
    </source>
</evidence>
<evidence type="ECO:0000305" key="7"/>
<evidence type="ECO:0000305" key="8">
    <source>
    </source>
</evidence>
<evidence type="ECO:0000305" key="9">
    <source>
    </source>
</evidence>
<reference key="1">
    <citation type="journal article" date="2017" name="J. Am. Chem. Soc.">
        <title>Collaborative Biosynthesis of Maleimide- and Succinimide-Containing Natural Products by Fungal Polyketide Megasynthases.</title>
        <authorList>
            <person name="Sato M."/>
            <person name="Dander J.E."/>
            <person name="Sato C."/>
            <person name="Hung Y.S."/>
            <person name="Gao S.S."/>
            <person name="Tang M.C."/>
            <person name="Hang L."/>
            <person name="Winter J.M."/>
            <person name="Garg N.K."/>
            <person name="Watanabe K."/>
            <person name="Tang Y."/>
        </authorList>
    </citation>
    <scope>NUCLEOTIDE SEQUENCE [GENOMIC DNA]</scope>
    <scope>FUNCTION</scope>
    <scope>INDUCTION</scope>
    <scope>PATHWAY</scope>
    <source>
        <strain>K85</strain>
    </source>
</reference>
<reference key="2">
    <citation type="journal article" date="2020" name="Chem. Commun. (Camb.)">
        <title>Evidence for enzyme catalysed intramolecular [4+2] Diels-Alder cyclization during the biosynthesis of pyrichalasin H.</title>
        <authorList>
            <person name="Hantke V."/>
            <person name="Skellam E.J."/>
            <person name="Cox R.J."/>
        </authorList>
    </citation>
    <scope>FUNCTION</scope>
</reference>
<accession>A0A1W5T317</accession>
<comment type="function">
    <text evidence="3 9">Diels-Alderase; part of the gene cluster that mediates the biosynthesis of oxaleimides, cytotoxic compounds containing an unusual disubstituted succinimide moiety (PubMed:28365998). The first step of the pathway is provided by the HR-PKS poxF that serves in a new mode of collaborative biosynthesis with the PKS-NRPS poxE, by providing the olefin containing amino acid substrate via the synthesis of an ACP-bound dec-4-enoate (PubMed:28365998). The cytochrome P450 monooxygenase poxM-catalyzed oxidation at the alpha-position creates the enzyme-bound 2-hydroxydec-4-enoyl-ACP thioester, which may be prone to spontaneous hydrolysis to yield 2-hydroxydec-4-enoic acid due to increased electrophilicity of the carbonyl (PubMed:28365998). 2-hydroxydec-4-enoic acid can then be further oxidized by poxM to yield the alpha-ketoacid 2-oxodec-4-enoicacid, which is reductively aminated by the aminotransferase poxL to yield (S,E)-2-aminodec-4-enoic acid (PubMed:28365998). The Hybrid PKS-NRPS synthetase poxE then performs condensation between the octaketide product of its PKS modules and the amino group of (S,E)-2-aminodec-4-enoic acid which is activated and incorporated by the adenylation domain (PubMed:28365998). The resulting aminoacyl product can be cyclized by the Diels-Alderase PoxQ and reductively released by the reductive (R) domain of poxE to yield an aldehyde intermediate (Probable) (PubMed:28365998). The released aldehyde is then substrate for a Knoevenagel condensation by the hydrolyase poxO followed by an oxidation at the 5-position of the pyrrolidone ring (PubMed:28365998). The presence of the olefin from the amino acid building block allows for migration of the substituted allyl group to occur (PubMed:28365998). This allylic transposition reaction takes place in a conjugate addition, semipinacol-like fashion to yield a succinimide intermediate (PubMed:28365998). Iterative two-electron oxidations of the C7 methyl of the succinimide intermediate to the carboxylic acid can be catalyzed by one of two remaining cytochrome P450 monooxygenasess poxC or poxD to yield oxaleimide A (PubMed:28365998). Subsequent oxidation yields the maleimide scaffold oxaleimide I (PubMed:28365998). Both oxaleimide A and oxaleimide I can undergo oxidative modifications in the decalin ring to yield the series of products oxaleimides B to H (PubMed:28365998).</text>
</comment>
<comment type="pathway">
    <text evidence="8">Secondary metabolite biosynthesis.</text>
</comment>
<comment type="induction">
    <text evidence="3">Expression is positively regulated by the oxaleimides biosynthesis cluster-specific transcription factor poxB.</text>
</comment>
<comment type="similarity">
    <text evidence="7">Belongs to the Diels-Alderase family.</text>
</comment>
<name>POXQ_PENOX</name>
<sequence>MARIPLEFLSITLPVLLLAYCLAIEYEVSLPTIAHTSPASNPEEYLQSIYEQLNLDLPSTCTVNHLSAFDNTPTSLLNFSTSPVEHFDAPKLPSGLNATAGEQWAFDGTSSSGRSGLLLGIYRDASYAFLGPGNFRLSLDLVWDNSTTWSTVDYLSSSTVHTCTDKVVGIWSHSADHYYVFTVTADAKHARIHFHTPDVVGAVDLYSTTPARYPDGALFPSEVSVTQNAPMLHWVEPIPGGLIDVDLKVKDTPFRWTGLGGHERWWSAKGWLDLMTHWEAVRLMAGPYVLSFWQPTSRVNGVAYPSAFLTKYGEKVFSAVSGKVSEVEDYILYRPVRMEKQARETGYEVDLVSPAQGRRWVFGLEYRNQEFEFELGDAAGGRAYVGRAKGGEVHADDKPEEPSEGVFFIEHVDVKALTVPRAYVVVSFEFGPPIHGADIWVAC</sequence>
<dbReference type="EC" id="5.5.1.-" evidence="4"/>
<dbReference type="EMBL" id="KY764306">
    <property type="protein sequence ID" value="ARF05991.1"/>
    <property type="molecule type" value="Genomic_DNA"/>
</dbReference>
<dbReference type="SMR" id="A0A1W5T317"/>
<dbReference type="GlyCosmos" id="A0A1W5T317">
    <property type="glycosylation" value="3 sites, No reported glycans"/>
</dbReference>
<dbReference type="GO" id="GO:0016853">
    <property type="term" value="F:isomerase activity"/>
    <property type="evidence" value="ECO:0007669"/>
    <property type="project" value="UniProtKB-KW"/>
</dbReference>
<dbReference type="InterPro" id="IPR054499">
    <property type="entry name" value="DA_C"/>
</dbReference>
<dbReference type="Pfam" id="PF22903">
    <property type="entry name" value="DA_C"/>
    <property type="match status" value="1"/>
</dbReference>
<dbReference type="Pfam" id="PF24137">
    <property type="entry name" value="DA_N"/>
    <property type="match status" value="1"/>
</dbReference>
<dbReference type="SUPFAM" id="SSF159245">
    <property type="entry name" value="AttH-like"/>
    <property type="match status" value="1"/>
</dbReference>
<feature type="signal peptide" evidence="1">
    <location>
        <begin position="1"/>
        <end position="23"/>
    </location>
</feature>
<feature type="chain" id="PRO_5012190531" description="Diels-Alderase poxQ">
    <location>
        <begin position="24"/>
        <end position="443"/>
    </location>
</feature>
<feature type="glycosylation site" description="N-linked (GlcNAc...) asparagine" evidence="2">
    <location>
        <position position="78"/>
    </location>
</feature>
<feature type="glycosylation site" description="N-linked (GlcNAc...) asparagine" evidence="2">
    <location>
        <position position="97"/>
    </location>
</feature>
<feature type="glycosylation site" description="N-linked (GlcNAc...) asparagine" evidence="2">
    <location>
        <position position="145"/>
    </location>
</feature>
<proteinExistence type="evidence at transcript level"/>
<protein>
    <recommendedName>
        <fullName evidence="6">Diels-Alderase poxQ</fullName>
        <ecNumber evidence="4">5.5.1.-</ecNumber>
    </recommendedName>
    <alternativeName>
        <fullName evidence="5">Oxaleimides biosynthesis cluster protein Q</fullName>
    </alternativeName>
</protein>
<gene>
    <name evidence="5" type="primary">poxQ</name>
</gene>
<keyword id="KW-0325">Glycoprotein</keyword>
<keyword id="KW-0413">Isomerase</keyword>
<keyword id="KW-0732">Signal</keyword>